<comment type="function">
    <text evidence="7">Acts as a component of the CCR4-NOT core complex, which in the nucleus seems to be a general transcription factor, and in the cytoplasm the major mRNA deadenylase involved in mRNA turnover. The NOT protein subcomplex negatively regulates the basal and activated transcription of many genes. Preferentially affects TC-type TATA element-dependent transcription. Could directly or indirectly inhibit component(s) of the general transcription machinery.</text>
</comment>
<comment type="subunit">
    <text evidence="3 4 5 7">Forms a NOT protein complex that comprises NOT1, NOT2, NOT3, NOT4 and NOT5. Subunit of the 1.0 MDa CCR4-NOT core complex that contains CCR4, CAF1, NOT1, NOT2, NOT3, NOT4, NOT5, CAF40 and CAF130. In the complex interacts with NOT1 and NOT2. The core complex probably is part of a less characterized 1.9 MDa CCR4-NOT complex.</text>
</comment>
<comment type="interaction">
    <interactant intactId="EBI-12184">
        <id>Q12514</id>
    </interactant>
    <interactant intactId="EBI-28306">
        <id>P53829</id>
        <label>CAF40</label>
    </interactant>
    <organismsDiffer>false</organismsDiffer>
    <experiments>4</experiments>
</comment>
<comment type="interaction">
    <interactant intactId="EBI-12184">
        <id>Q12514</id>
    </interactant>
    <interactant intactId="EBI-4396">
        <id>P31384</id>
        <label>CCR4</label>
    </interactant>
    <organismsDiffer>false</organismsDiffer>
    <experiments>3</experiments>
</comment>
<comment type="interaction">
    <interactant intactId="EBI-12184">
        <id>Q12514</id>
    </interactant>
    <interactant intactId="EBI-12153">
        <id>P06100</id>
        <label>CDC36</label>
    </interactant>
    <organismsDiffer>false</organismsDiffer>
    <experiments>7</experiments>
</comment>
<comment type="interaction">
    <interactant intactId="EBI-12184">
        <id>Q12514</id>
    </interactant>
    <interactant intactId="EBI-12139">
        <id>P25655</id>
        <label>CDC39</label>
    </interactant>
    <organismsDiffer>false</organismsDiffer>
    <experiments>7</experiments>
</comment>
<comment type="interaction">
    <interactant intactId="EBI-12184">
        <id>Q12514</id>
    </interactant>
    <interactant intactId="EBI-12174">
        <id>P34909</id>
        <label>MOT2</label>
    </interactant>
    <organismsDiffer>false</organismsDiffer>
    <experiments>4</experiments>
</comment>
<comment type="interaction">
    <interactant intactId="EBI-12184">
        <id>Q12514</id>
    </interactant>
    <interactant intactId="EBI-26299">
        <id>P47086</id>
        <label>YJR011C</label>
    </interactant>
    <organismsDiffer>false</organismsDiffer>
    <experiments>2</experiments>
</comment>
<comment type="subcellular location">
    <subcellularLocation>
        <location evidence="8">Cytoplasm</location>
    </subcellularLocation>
    <subcellularLocation>
        <location>Nucleus</location>
    </subcellularLocation>
</comment>
<comment type="miscellaneous">
    <text evidence="6">Present with 5110 molecules/cell in log phase SD medium.</text>
</comment>
<comment type="similarity">
    <text evidence="8">Belongs to the CNOT2/3/5 family.</text>
</comment>
<evidence type="ECO:0000255" key="1"/>
<evidence type="ECO:0000256" key="2">
    <source>
        <dbReference type="SAM" id="MobiDB-lite"/>
    </source>
</evidence>
<evidence type="ECO:0000269" key="3">
    <source>
    </source>
</evidence>
<evidence type="ECO:0000269" key="4">
    <source>
    </source>
</evidence>
<evidence type="ECO:0000269" key="5">
    <source>
    </source>
</evidence>
<evidence type="ECO:0000269" key="6">
    <source>
    </source>
</evidence>
<evidence type="ECO:0000269" key="7">
    <source>
    </source>
</evidence>
<evidence type="ECO:0000305" key="8"/>
<evidence type="ECO:0007744" key="9">
    <source>
    </source>
</evidence>
<evidence type="ECO:0007744" key="10">
    <source>
    </source>
</evidence>
<evidence type="ECO:0007744" key="11">
    <source>
    </source>
</evidence>
<evidence type="ECO:0007744" key="12">
    <source>
    </source>
</evidence>
<evidence type="ECO:0007829" key="13">
    <source>
        <dbReference type="PDB" id="4BY6"/>
    </source>
</evidence>
<feature type="chain" id="PRO_0000198338" description="General negative regulator of transcription subunit 5">
    <location>
        <begin position="1"/>
        <end position="560"/>
    </location>
</feature>
<feature type="region of interest" description="Disordered" evidence="2">
    <location>
        <begin position="212"/>
        <end position="330"/>
    </location>
</feature>
<feature type="coiled-coil region" evidence="1">
    <location>
        <begin position="3"/>
        <end position="26"/>
    </location>
</feature>
<feature type="coiled-coil region" evidence="1">
    <location>
        <begin position="37"/>
        <end position="71"/>
    </location>
</feature>
<feature type="coiled-coil region" evidence="1">
    <location>
        <begin position="124"/>
        <end position="177"/>
    </location>
</feature>
<feature type="compositionally biased region" description="Polar residues" evidence="2">
    <location>
        <begin position="215"/>
        <end position="237"/>
    </location>
</feature>
<feature type="compositionally biased region" description="Low complexity" evidence="2">
    <location>
        <begin position="273"/>
        <end position="288"/>
    </location>
</feature>
<feature type="compositionally biased region" description="Polar residues" evidence="2">
    <location>
        <begin position="299"/>
        <end position="311"/>
    </location>
</feature>
<feature type="modified residue" description="Phosphothreonine" evidence="9 11">
    <location>
        <position position="306"/>
    </location>
</feature>
<feature type="modified residue" description="Phosphoserine" evidence="9 10 11">
    <location>
        <position position="377"/>
    </location>
</feature>
<feature type="cross-link" description="Glycyl lysine isopeptide (Lys-Gly) (interchain with G-Cter in ubiquitin)" evidence="12">
    <location>
        <position position="338"/>
    </location>
</feature>
<feature type="turn" evidence="13">
    <location>
        <begin position="348"/>
        <end position="351"/>
    </location>
</feature>
<feature type="helix" evidence="13">
    <location>
        <begin position="353"/>
        <end position="355"/>
    </location>
</feature>
<feature type="helix" evidence="13">
    <location>
        <begin position="356"/>
        <end position="364"/>
    </location>
</feature>
<feature type="helix" evidence="13">
    <location>
        <begin position="367"/>
        <end position="370"/>
    </location>
</feature>
<feature type="helix" evidence="13">
    <location>
        <begin position="378"/>
        <end position="389"/>
    </location>
</feature>
<feature type="helix" evidence="13">
    <location>
        <begin position="394"/>
        <end position="397"/>
    </location>
</feature>
<feature type="turn" evidence="13">
    <location>
        <begin position="459"/>
        <end position="462"/>
    </location>
</feature>
<feature type="helix" evidence="13">
    <location>
        <begin position="464"/>
        <end position="469"/>
    </location>
</feature>
<feature type="helix" evidence="13">
    <location>
        <begin position="474"/>
        <end position="483"/>
    </location>
</feature>
<feature type="helix" evidence="13">
    <location>
        <begin position="488"/>
        <end position="501"/>
    </location>
</feature>
<feature type="strand" evidence="13">
    <location>
        <begin position="504"/>
        <end position="506"/>
    </location>
</feature>
<feature type="turn" evidence="13">
    <location>
        <begin position="507"/>
        <end position="509"/>
    </location>
</feature>
<feature type="strand" evidence="13">
    <location>
        <begin position="512"/>
        <end position="515"/>
    </location>
</feature>
<feature type="strand" evidence="13">
    <location>
        <begin position="532"/>
        <end position="535"/>
    </location>
</feature>
<feature type="turn" evidence="13">
    <location>
        <begin position="537"/>
        <end position="540"/>
    </location>
</feature>
<feature type="strand" evidence="13">
    <location>
        <begin position="542"/>
        <end position="545"/>
    </location>
</feature>
<feature type="helix" evidence="13">
    <location>
        <begin position="554"/>
        <end position="556"/>
    </location>
</feature>
<name>NOT5_YEAST</name>
<organism>
    <name type="scientific">Saccharomyces cerevisiae (strain ATCC 204508 / S288c)</name>
    <name type="common">Baker's yeast</name>
    <dbReference type="NCBI Taxonomy" id="559292"/>
    <lineage>
        <taxon>Eukaryota</taxon>
        <taxon>Fungi</taxon>
        <taxon>Dikarya</taxon>
        <taxon>Ascomycota</taxon>
        <taxon>Saccharomycotina</taxon>
        <taxon>Saccharomycetes</taxon>
        <taxon>Saccharomycetales</taxon>
        <taxon>Saccharomycetaceae</taxon>
        <taxon>Saccharomyces</taxon>
    </lineage>
</organism>
<reference key="1">
    <citation type="submission" date="1996-03" db="EMBL/GenBank/DDBJ databases">
        <authorList>
            <person name="Couch J."/>
        </authorList>
    </citation>
    <scope>NUCLEOTIDE SEQUENCE [GENOMIC DNA]</scope>
    <source>
        <strain>ATCC 204511 / S288c / AB972</strain>
    </source>
</reference>
<reference key="2">
    <citation type="journal article" date="1997" name="Nature">
        <title>The nucleotide sequence of Saccharomyces cerevisiae chromosome XVI.</title>
        <authorList>
            <person name="Bussey H."/>
            <person name="Storms R.K."/>
            <person name="Ahmed A."/>
            <person name="Albermann K."/>
            <person name="Allen E."/>
            <person name="Ansorge W."/>
            <person name="Araujo R."/>
            <person name="Aparicio A."/>
            <person name="Barrell B.G."/>
            <person name="Badcock K."/>
            <person name="Benes V."/>
            <person name="Botstein D."/>
            <person name="Bowman S."/>
            <person name="Brueckner M."/>
            <person name="Carpenter J."/>
            <person name="Cherry J.M."/>
            <person name="Chung E."/>
            <person name="Churcher C.M."/>
            <person name="Coster F."/>
            <person name="Davis K."/>
            <person name="Davis R.W."/>
            <person name="Dietrich F.S."/>
            <person name="Delius H."/>
            <person name="DiPaolo T."/>
            <person name="Dubois E."/>
            <person name="Duesterhoeft A."/>
            <person name="Duncan M."/>
            <person name="Floeth M."/>
            <person name="Fortin N."/>
            <person name="Friesen J.D."/>
            <person name="Fritz C."/>
            <person name="Goffeau A."/>
            <person name="Hall J."/>
            <person name="Hebling U."/>
            <person name="Heumann K."/>
            <person name="Hilbert H."/>
            <person name="Hillier L.W."/>
            <person name="Hunicke-Smith S."/>
            <person name="Hyman R.W."/>
            <person name="Johnston M."/>
            <person name="Kalman S."/>
            <person name="Kleine K."/>
            <person name="Komp C."/>
            <person name="Kurdi O."/>
            <person name="Lashkari D."/>
            <person name="Lew H."/>
            <person name="Lin A."/>
            <person name="Lin D."/>
            <person name="Louis E.J."/>
            <person name="Marathe R."/>
            <person name="Messenguy F."/>
            <person name="Mewes H.-W."/>
            <person name="Mirtipati S."/>
            <person name="Moestl D."/>
            <person name="Mueller-Auer S."/>
            <person name="Namath A."/>
            <person name="Nentwich U."/>
            <person name="Oefner P."/>
            <person name="Pearson D."/>
            <person name="Petel F.X."/>
            <person name="Pohl T.M."/>
            <person name="Purnelle B."/>
            <person name="Rajandream M.A."/>
            <person name="Rechmann S."/>
            <person name="Rieger M."/>
            <person name="Riles L."/>
            <person name="Roberts D."/>
            <person name="Schaefer M."/>
            <person name="Scharfe M."/>
            <person name="Scherens B."/>
            <person name="Schramm S."/>
            <person name="Schroeder M."/>
            <person name="Sdicu A.-M."/>
            <person name="Tettelin H."/>
            <person name="Urrestarazu L.A."/>
            <person name="Ushinsky S."/>
            <person name="Vierendeels F."/>
            <person name="Vissers S."/>
            <person name="Voss H."/>
            <person name="Walsh S.V."/>
            <person name="Wambutt R."/>
            <person name="Wang Y."/>
            <person name="Wedler E."/>
            <person name="Wedler H."/>
            <person name="Winnett E."/>
            <person name="Zhong W.-W."/>
            <person name="Zollner A."/>
            <person name="Vo D.H."/>
            <person name="Hani J."/>
        </authorList>
    </citation>
    <scope>NUCLEOTIDE SEQUENCE [LARGE SCALE GENOMIC DNA]</scope>
    <source>
        <strain>ATCC 204508 / S288c</strain>
    </source>
</reference>
<reference key="3">
    <citation type="journal article" date="2014" name="G3 (Bethesda)">
        <title>The reference genome sequence of Saccharomyces cerevisiae: Then and now.</title>
        <authorList>
            <person name="Engel S.R."/>
            <person name="Dietrich F.S."/>
            <person name="Fisk D.G."/>
            <person name="Binkley G."/>
            <person name="Balakrishnan R."/>
            <person name="Costanzo M.C."/>
            <person name="Dwight S.S."/>
            <person name="Hitz B.C."/>
            <person name="Karra K."/>
            <person name="Nash R.S."/>
            <person name="Weng S."/>
            <person name="Wong E.D."/>
            <person name="Lloyd P."/>
            <person name="Skrzypek M.S."/>
            <person name="Miyasato S.R."/>
            <person name="Simison M."/>
            <person name="Cherry J.M."/>
        </authorList>
    </citation>
    <scope>GENOME REANNOTATION</scope>
    <source>
        <strain>ATCC 204508 / S288c</strain>
    </source>
</reference>
<reference key="4">
    <citation type="journal article" date="2007" name="Genome Res.">
        <title>Approaching a complete repository of sequence-verified protein-encoding clones for Saccharomyces cerevisiae.</title>
        <authorList>
            <person name="Hu Y."/>
            <person name="Rolfs A."/>
            <person name="Bhullar B."/>
            <person name="Murthy T.V.S."/>
            <person name="Zhu C."/>
            <person name="Berger M.F."/>
            <person name="Camargo A.A."/>
            <person name="Kelley F."/>
            <person name="McCarron S."/>
            <person name="Jepson D."/>
            <person name="Richardson A."/>
            <person name="Raphael J."/>
            <person name="Moreira D."/>
            <person name="Taycher E."/>
            <person name="Zuo D."/>
            <person name="Mohr S."/>
            <person name="Kane M.F."/>
            <person name="Williamson J."/>
            <person name="Simpson A.J.G."/>
            <person name="Bulyk M.L."/>
            <person name="Harlow E."/>
            <person name="Marsischky G."/>
            <person name="Kolodner R.D."/>
            <person name="LaBaer J."/>
        </authorList>
    </citation>
    <scope>NUCLEOTIDE SEQUENCE [GENOMIC DNA]</scope>
    <source>
        <strain>ATCC 204508 / S288c</strain>
    </source>
</reference>
<reference key="5">
    <citation type="journal article" date="1998" name="Gene">
        <title>Characterization of NOT5 that encodes a new component of the Not protein complex.</title>
        <authorList>
            <person name="Oberholzer U."/>
            <person name="Collart M.A."/>
        </authorList>
    </citation>
    <scope>CHARACTERIZATION</scope>
</reference>
<reference key="6">
    <citation type="journal article" date="1998" name="EMBO J.">
        <title>The NOT proteins are part of the CCR4 transcriptional complex and affect gene expression both positively and negatively.</title>
        <authorList>
            <person name="Liu H.Y."/>
            <person name="Badarinarayana V."/>
            <person name="Audino D.C."/>
            <person name="Rappsilber J."/>
            <person name="Mann M."/>
            <person name="Denis C.L."/>
        </authorList>
    </citation>
    <scope>IDENTIFICATION IN THE CCR4-NOT CORE COMPLEX</scope>
    <scope>FUNCTION OF THE CCR4-NOT CORE COMPLEX IN TRANSCRIPTIONAL REGULATION</scope>
</reference>
<reference key="7">
    <citation type="journal article" date="1999" name="Mol. Cell. Biol.">
        <title>The CCR4 and CAF1 proteins of the CCR4-NOT complex are physically and functionally separated from NOT2, NOT4, and NOT5.</title>
        <authorList>
            <person name="Bai Y."/>
            <person name="Salvadore C."/>
            <person name="Chiang Y.C."/>
            <person name="Collart M.A."/>
            <person name="Liu H.Y."/>
            <person name="Denis C.L."/>
        </authorList>
    </citation>
    <scope>INTERACTION WITH NOT1</scope>
</reference>
<reference key="8">
    <citation type="journal article" date="2001" name="J. Mol. Biol.">
        <title>Purification and characterization of the 1.0 MDa CCR4-NOT complex identifies two novel components of the complex.</title>
        <authorList>
            <person name="Chen J."/>
            <person name="Rappsilber J."/>
            <person name="Chiang Y.C."/>
            <person name="Russell P."/>
            <person name="Mann M."/>
            <person name="Denis C.L."/>
        </authorList>
    </citation>
    <scope>IDENTIFICATION IN THE CCR4-NOT CORE COMPLEX</scope>
</reference>
<reference key="9">
    <citation type="journal article" date="2002" name="J. Mol. Biol.">
        <title>Characterization of mutations in NOT2 indicates that it plays an important role in maintaining the integrity of the CCR4-NOT complex.</title>
        <authorList>
            <person name="Russell P."/>
            <person name="Benson J.D."/>
            <person name="Denis C.L."/>
        </authorList>
    </citation>
    <scope>INTERACTION WITH NOT2</scope>
</reference>
<reference key="10">
    <citation type="journal article" date="2003" name="Nature">
        <title>Global analysis of protein expression in yeast.</title>
        <authorList>
            <person name="Ghaemmaghami S."/>
            <person name="Huh W.-K."/>
            <person name="Bower K."/>
            <person name="Howson R.W."/>
            <person name="Belle A."/>
            <person name="Dephoure N."/>
            <person name="O'Shea E.K."/>
            <person name="Weissman J.S."/>
        </authorList>
    </citation>
    <scope>LEVEL OF PROTEIN EXPRESSION [LARGE SCALE ANALYSIS]</scope>
</reference>
<reference key="11">
    <citation type="journal article" date="2007" name="J. Proteome Res.">
        <title>Large-scale phosphorylation analysis of alpha-factor-arrested Saccharomyces cerevisiae.</title>
        <authorList>
            <person name="Li X."/>
            <person name="Gerber S.A."/>
            <person name="Rudner A.D."/>
            <person name="Beausoleil S.A."/>
            <person name="Haas W."/>
            <person name="Villen J."/>
            <person name="Elias J.E."/>
            <person name="Gygi S.P."/>
        </authorList>
    </citation>
    <scope>PHOSPHORYLATION [LARGE SCALE ANALYSIS] AT THR-306 AND SER-377</scope>
    <scope>IDENTIFICATION BY MASS SPECTROMETRY [LARGE SCALE ANALYSIS]</scope>
    <source>
        <strain>ADR376</strain>
    </source>
</reference>
<reference key="12">
    <citation type="journal article" date="2008" name="Mol. Cell. Proteomics">
        <title>A multidimensional chromatography technology for in-depth phosphoproteome analysis.</title>
        <authorList>
            <person name="Albuquerque C.P."/>
            <person name="Smolka M.B."/>
            <person name="Payne S.H."/>
            <person name="Bafna V."/>
            <person name="Eng J."/>
            <person name="Zhou H."/>
        </authorList>
    </citation>
    <scope>PHOSPHORYLATION [LARGE SCALE ANALYSIS] AT SER-377</scope>
    <scope>IDENTIFICATION BY MASS SPECTROMETRY [LARGE SCALE ANALYSIS]</scope>
</reference>
<reference key="13">
    <citation type="journal article" date="2009" name="Science">
        <title>Global analysis of Cdk1 substrate phosphorylation sites provides insights into evolution.</title>
        <authorList>
            <person name="Holt L.J."/>
            <person name="Tuch B.B."/>
            <person name="Villen J."/>
            <person name="Johnson A.D."/>
            <person name="Gygi S.P."/>
            <person name="Morgan D.O."/>
        </authorList>
    </citation>
    <scope>PHOSPHORYLATION [LARGE SCALE ANALYSIS] AT THR-306 AND SER-377</scope>
    <scope>IDENTIFICATION BY MASS SPECTROMETRY [LARGE SCALE ANALYSIS]</scope>
</reference>
<reference key="14">
    <citation type="journal article" date="2012" name="Proteomics">
        <title>Sites of ubiquitin attachment in Saccharomyces cerevisiae.</title>
        <authorList>
            <person name="Starita L.M."/>
            <person name="Lo R.S."/>
            <person name="Eng J.K."/>
            <person name="von Haller P.D."/>
            <person name="Fields S."/>
        </authorList>
    </citation>
    <scope>UBIQUITINATION [LARGE SCALE ANALYSIS] AT LYS-338</scope>
    <scope>IDENTIFICATION BY MASS SPECTROMETRY [LARGE SCALE ANALYSIS]</scope>
</reference>
<proteinExistence type="evidence at protein level"/>
<accession>Q12514</accession>
<accession>D6W476</accession>
<keyword id="KW-0002">3D-structure</keyword>
<keyword id="KW-0010">Activator</keyword>
<keyword id="KW-0175">Coiled coil</keyword>
<keyword id="KW-0963">Cytoplasm</keyword>
<keyword id="KW-1017">Isopeptide bond</keyword>
<keyword id="KW-0539">Nucleus</keyword>
<keyword id="KW-0597">Phosphoprotein</keyword>
<keyword id="KW-1185">Reference proteome</keyword>
<keyword id="KW-0678">Repressor</keyword>
<keyword id="KW-0804">Transcription</keyword>
<keyword id="KW-0805">Transcription regulation</keyword>
<keyword id="KW-0832">Ubl conjugation</keyword>
<gene>
    <name type="primary">NOT5</name>
    <name type="ordered locus">YPR072W</name>
    <name type="ORF">YP9499.27</name>
</gene>
<dbReference type="EMBL" id="U51033">
    <property type="protein sequence ID" value="AAB68123.1"/>
    <property type="molecule type" value="Genomic_DNA"/>
</dbReference>
<dbReference type="EMBL" id="Z71255">
    <property type="protein sequence ID" value="CAA94980.1"/>
    <property type="molecule type" value="Genomic_DNA"/>
</dbReference>
<dbReference type="EMBL" id="Z49219">
    <property type="protein sequence ID" value="CAA89189.1"/>
    <property type="molecule type" value="Genomic_DNA"/>
</dbReference>
<dbReference type="EMBL" id="AY692887">
    <property type="protein sequence ID" value="AAT92906.1"/>
    <property type="molecule type" value="Genomic_DNA"/>
</dbReference>
<dbReference type="EMBL" id="BK006949">
    <property type="protein sequence ID" value="DAA11492.1"/>
    <property type="molecule type" value="Genomic_DNA"/>
</dbReference>
<dbReference type="PIR" id="S54093">
    <property type="entry name" value="S54093"/>
</dbReference>
<dbReference type="RefSeq" id="NP_015397.1">
    <property type="nucleotide sequence ID" value="NM_001184169.1"/>
</dbReference>
<dbReference type="PDB" id="4BY6">
    <property type="method" value="X-ray"/>
    <property type="resolution" value="2.80 A"/>
    <property type="chains" value="C/F=299-560"/>
</dbReference>
<dbReference type="PDB" id="6TB3">
    <property type="method" value="EM"/>
    <property type="resolution" value="2.80 A"/>
    <property type="chains" value="BW=2-113"/>
</dbReference>
<dbReference type="PDB" id="8K82">
    <property type="method" value="EM"/>
    <property type="resolution" value="3.00 A"/>
    <property type="chains" value="CN=1-560"/>
</dbReference>
<dbReference type="PDBsum" id="4BY6"/>
<dbReference type="PDBsum" id="6TB3"/>
<dbReference type="PDBsum" id="8K82"/>
<dbReference type="EMDB" id="EMD-10431"/>
<dbReference type="EMDB" id="EMD-36945"/>
<dbReference type="SMR" id="Q12514"/>
<dbReference type="BioGRID" id="36245">
    <property type="interactions" value="84"/>
</dbReference>
<dbReference type="ComplexPortal" id="CPX-1800">
    <property type="entry name" value="CCR4-NOT mRNA deadenylase complex"/>
</dbReference>
<dbReference type="DIP" id="DIP-2257N"/>
<dbReference type="FunCoup" id="Q12514">
    <property type="interactions" value="221"/>
</dbReference>
<dbReference type="IntAct" id="Q12514">
    <property type="interactions" value="28"/>
</dbReference>
<dbReference type="MINT" id="Q12514"/>
<dbReference type="STRING" id="4932.YPR072W"/>
<dbReference type="iPTMnet" id="Q12514"/>
<dbReference type="PaxDb" id="4932-YPR072W"/>
<dbReference type="PeptideAtlas" id="Q12514"/>
<dbReference type="EnsemblFungi" id="YPR072W_mRNA">
    <property type="protein sequence ID" value="YPR072W"/>
    <property type="gene ID" value="YPR072W"/>
</dbReference>
<dbReference type="GeneID" id="856186"/>
<dbReference type="KEGG" id="sce:YPR072W"/>
<dbReference type="AGR" id="SGD:S000006276"/>
<dbReference type="SGD" id="S000006276">
    <property type="gene designation" value="NOT5"/>
</dbReference>
<dbReference type="VEuPathDB" id="FungiDB:YPR072W"/>
<dbReference type="eggNOG" id="KOG2150">
    <property type="taxonomic scope" value="Eukaryota"/>
</dbReference>
<dbReference type="GeneTree" id="ENSGT00390000014743"/>
<dbReference type="HOGENOM" id="CLU_013819_3_0_1"/>
<dbReference type="InParanoid" id="Q12514"/>
<dbReference type="OMA" id="FIFYHYQ"/>
<dbReference type="OrthoDB" id="293823at2759"/>
<dbReference type="BioCyc" id="YEAST:G3O-34219-MONOMER"/>
<dbReference type="BioGRID-ORCS" id="856186">
    <property type="hits" value="0 hits in 10 CRISPR screens"/>
</dbReference>
<dbReference type="CD-CODE" id="A777E0F8">
    <property type="entry name" value="P-body"/>
</dbReference>
<dbReference type="CD-CODE" id="E03F929F">
    <property type="entry name" value="Stress granule"/>
</dbReference>
<dbReference type="EvolutionaryTrace" id="Q12514"/>
<dbReference type="PRO" id="PR:Q12514"/>
<dbReference type="Proteomes" id="UP000002311">
    <property type="component" value="Chromosome XVI"/>
</dbReference>
<dbReference type="RNAct" id="Q12514">
    <property type="molecule type" value="protein"/>
</dbReference>
<dbReference type="GO" id="GO:0030015">
    <property type="term" value="C:CCR4-NOT core complex"/>
    <property type="evidence" value="ECO:0000353"/>
    <property type="project" value="SGD"/>
</dbReference>
<dbReference type="GO" id="GO:0005737">
    <property type="term" value="C:cytoplasm"/>
    <property type="evidence" value="ECO:0000314"/>
    <property type="project" value="SGD"/>
</dbReference>
<dbReference type="GO" id="GO:0005634">
    <property type="term" value="C:nucleus"/>
    <property type="evidence" value="ECO:0007669"/>
    <property type="project" value="UniProtKB-SubCell"/>
</dbReference>
<dbReference type="GO" id="GO:0000932">
    <property type="term" value="C:P-body"/>
    <property type="evidence" value="ECO:0000318"/>
    <property type="project" value="GO_Central"/>
</dbReference>
<dbReference type="GO" id="GO:0000290">
    <property type="term" value="P:deadenylation-dependent decapping of nuclear-transcribed mRNA"/>
    <property type="evidence" value="ECO:0000315"/>
    <property type="project" value="SGD"/>
</dbReference>
<dbReference type="GO" id="GO:0031087">
    <property type="term" value="P:deadenylation-independent decapping of nuclear-transcribed mRNA"/>
    <property type="evidence" value="ECO:0000315"/>
    <property type="project" value="SGD"/>
</dbReference>
<dbReference type="GO" id="GO:0000289">
    <property type="term" value="P:nuclear-transcribed mRNA poly(A) tail shortening"/>
    <property type="evidence" value="ECO:0000314"/>
    <property type="project" value="SGD"/>
</dbReference>
<dbReference type="GO" id="GO:0032968">
    <property type="term" value="P:positive regulation of transcription elongation by RNA polymerase II"/>
    <property type="evidence" value="ECO:0000314"/>
    <property type="project" value="ComplexPortal"/>
</dbReference>
<dbReference type="GO" id="GO:0016567">
    <property type="term" value="P:protein ubiquitination"/>
    <property type="evidence" value="ECO:0000315"/>
    <property type="project" value="SGD"/>
</dbReference>
<dbReference type="GO" id="GO:0006368">
    <property type="term" value="P:transcription elongation by RNA polymerase II"/>
    <property type="evidence" value="ECO:0000315"/>
    <property type="project" value="SGD"/>
</dbReference>
<dbReference type="FunFam" id="2.30.30.1020:FF:000011">
    <property type="entry name" value="CCR4-NOT transcriptional complex subunit"/>
    <property type="match status" value="1"/>
</dbReference>
<dbReference type="Gene3D" id="2.30.30.1020">
    <property type="entry name" value="CCR4-NOT complex subunit 2/3/5, C-terminal domain"/>
    <property type="match status" value="1"/>
</dbReference>
<dbReference type="InterPro" id="IPR038635">
    <property type="entry name" value="CCR4-NOT_su2/3/5_C_sf"/>
</dbReference>
<dbReference type="InterPro" id="IPR012270">
    <property type="entry name" value="CCR4-NOT_su3/5"/>
</dbReference>
<dbReference type="InterPro" id="IPR040168">
    <property type="entry name" value="Not2/3/5"/>
</dbReference>
<dbReference type="InterPro" id="IPR007282">
    <property type="entry name" value="NOT2/3/5_C"/>
</dbReference>
<dbReference type="InterPro" id="IPR007207">
    <property type="entry name" value="Not_N"/>
</dbReference>
<dbReference type="PANTHER" id="PTHR23326">
    <property type="entry name" value="CCR4 NOT-RELATED"/>
    <property type="match status" value="1"/>
</dbReference>
<dbReference type="Pfam" id="PF04153">
    <property type="entry name" value="NOT2_3_5_C"/>
    <property type="match status" value="1"/>
</dbReference>
<dbReference type="Pfam" id="PF04065">
    <property type="entry name" value="Not3"/>
    <property type="match status" value="1"/>
</dbReference>
<dbReference type="PIRSF" id="PIRSF005290">
    <property type="entry name" value="NOT_su_3_5"/>
    <property type="match status" value="1"/>
</dbReference>
<sequence length="560" mass="65855">MSQRKLQQDIDKLLKKVKEGIEDFDDIYEKFQSTDPSNSSHREKLESDLKREIKKLQKHRDQIKTWLSKEDVKDKQSVLMTNRRLIENGMERFKSVEKLMKTKQFSKEALTNPDIIKDPKELKKRDQVLFIHDCLDELQKQLEQYEAQENEEQTERHEFHIANLENILKKLQNNEMDPEPVEEFQDDIKYYVENNDDPDFIEYDTIYEDMGCEIQPSSSNNEAPKEGNNQTSLSSIRSSKKQERSPKKKAPQRDVSISDRATTPIAPGVESASQSISSTPTPVSTDTPLHTVKDDSIKFDNSTLGTPTTHVSMKKKESENDSEQQLNFPPDRTDEIRKTIQHDVETNAAFQNPLFNDELKYWLDSKRYLMQPLQEMSPKMVSQLESSLLNCPDSLDADSPCLYTKPLSLPHPTSIFFPNEPIRFVYPYDVPLNLTNNENDTDNKFGKDSKAKSKKDDDIYSRTSLARIFMKFDLDTLFFIFYHYQGSYEQFLAARELFKNRNWLFNKVDRCWYYKEIEKLPPGMGKSEEESWRYFDYKKSWLARRCGNDFVYNEEDFEKL</sequence>
<protein>
    <recommendedName>
        <fullName>General negative regulator of transcription subunit 5</fullName>
    </recommendedName>
</protein>